<feature type="chain" id="PRO_1000004191" description="Large ribosomal subunit protein bL33">
    <location>
        <begin position="1"/>
        <end position="55"/>
    </location>
</feature>
<name>RL33_SALPA</name>
<dbReference type="EMBL" id="CP000026">
    <property type="protein sequence ID" value="AAV79380.1"/>
    <property type="molecule type" value="Genomic_DNA"/>
</dbReference>
<dbReference type="RefSeq" id="WP_001051798.1">
    <property type="nucleotide sequence ID" value="NC_006511.1"/>
</dbReference>
<dbReference type="SMR" id="Q5PC32"/>
<dbReference type="GeneID" id="97607673"/>
<dbReference type="KEGG" id="spt:SPA3579"/>
<dbReference type="HOGENOM" id="CLU_190949_1_1_6"/>
<dbReference type="Proteomes" id="UP000008185">
    <property type="component" value="Chromosome"/>
</dbReference>
<dbReference type="GO" id="GO:0022625">
    <property type="term" value="C:cytosolic large ribosomal subunit"/>
    <property type="evidence" value="ECO:0007669"/>
    <property type="project" value="TreeGrafter"/>
</dbReference>
<dbReference type="GO" id="GO:0003735">
    <property type="term" value="F:structural constituent of ribosome"/>
    <property type="evidence" value="ECO:0007669"/>
    <property type="project" value="InterPro"/>
</dbReference>
<dbReference type="GO" id="GO:0006412">
    <property type="term" value="P:translation"/>
    <property type="evidence" value="ECO:0007669"/>
    <property type="project" value="UniProtKB-UniRule"/>
</dbReference>
<dbReference type="FunFam" id="2.20.28.120:FF:000001">
    <property type="entry name" value="50S ribosomal protein L33"/>
    <property type="match status" value="1"/>
</dbReference>
<dbReference type="Gene3D" id="2.20.28.120">
    <property type="entry name" value="Ribosomal protein L33"/>
    <property type="match status" value="1"/>
</dbReference>
<dbReference type="HAMAP" id="MF_00294">
    <property type="entry name" value="Ribosomal_bL33"/>
    <property type="match status" value="1"/>
</dbReference>
<dbReference type="InterPro" id="IPR001705">
    <property type="entry name" value="Ribosomal_bL33"/>
</dbReference>
<dbReference type="InterPro" id="IPR018264">
    <property type="entry name" value="Ribosomal_bL33_CS"/>
</dbReference>
<dbReference type="InterPro" id="IPR038584">
    <property type="entry name" value="Ribosomal_bL33_sf"/>
</dbReference>
<dbReference type="InterPro" id="IPR011332">
    <property type="entry name" value="Ribosomal_zn-bd"/>
</dbReference>
<dbReference type="NCBIfam" id="NF001860">
    <property type="entry name" value="PRK00595.1"/>
    <property type="match status" value="1"/>
</dbReference>
<dbReference type="NCBIfam" id="TIGR01023">
    <property type="entry name" value="rpmG_bact"/>
    <property type="match status" value="1"/>
</dbReference>
<dbReference type="PANTHER" id="PTHR15238">
    <property type="entry name" value="54S RIBOSOMAL PROTEIN L39, MITOCHONDRIAL"/>
    <property type="match status" value="1"/>
</dbReference>
<dbReference type="PANTHER" id="PTHR15238:SF1">
    <property type="entry name" value="LARGE RIBOSOMAL SUBUNIT PROTEIN BL33M"/>
    <property type="match status" value="1"/>
</dbReference>
<dbReference type="Pfam" id="PF00471">
    <property type="entry name" value="Ribosomal_L33"/>
    <property type="match status" value="1"/>
</dbReference>
<dbReference type="SUPFAM" id="SSF57829">
    <property type="entry name" value="Zn-binding ribosomal proteins"/>
    <property type="match status" value="1"/>
</dbReference>
<dbReference type="PROSITE" id="PS00582">
    <property type="entry name" value="RIBOSOMAL_L33"/>
    <property type="match status" value="1"/>
</dbReference>
<reference key="1">
    <citation type="journal article" date="2004" name="Nat. Genet.">
        <title>Comparison of genome degradation in Paratyphi A and Typhi, human-restricted serovars of Salmonella enterica that cause typhoid.</title>
        <authorList>
            <person name="McClelland M."/>
            <person name="Sanderson K.E."/>
            <person name="Clifton S.W."/>
            <person name="Latreille P."/>
            <person name="Porwollik S."/>
            <person name="Sabo A."/>
            <person name="Meyer R."/>
            <person name="Bieri T."/>
            <person name="Ozersky P."/>
            <person name="McLellan M."/>
            <person name="Harkins C.R."/>
            <person name="Wang C."/>
            <person name="Nguyen C."/>
            <person name="Berghoff A."/>
            <person name="Elliott G."/>
            <person name="Kohlberg S."/>
            <person name="Strong C."/>
            <person name="Du F."/>
            <person name="Carter J."/>
            <person name="Kremizki C."/>
            <person name="Layman D."/>
            <person name="Leonard S."/>
            <person name="Sun H."/>
            <person name="Fulton L."/>
            <person name="Nash W."/>
            <person name="Miner T."/>
            <person name="Minx P."/>
            <person name="Delehaunty K."/>
            <person name="Fronick C."/>
            <person name="Magrini V."/>
            <person name="Nhan M."/>
            <person name="Warren W."/>
            <person name="Florea L."/>
            <person name="Spieth J."/>
            <person name="Wilson R.K."/>
        </authorList>
    </citation>
    <scope>NUCLEOTIDE SEQUENCE [LARGE SCALE GENOMIC DNA]</scope>
    <source>
        <strain>ATCC 9150 / SARB42</strain>
    </source>
</reference>
<gene>
    <name evidence="1" type="primary">rpmG</name>
    <name type="ordered locus">SPA3579</name>
</gene>
<protein>
    <recommendedName>
        <fullName evidence="1">Large ribosomal subunit protein bL33</fullName>
    </recommendedName>
    <alternativeName>
        <fullName evidence="2">50S ribosomal protein L33</fullName>
    </alternativeName>
</protein>
<accession>Q5PC32</accession>
<sequence>MAKGIREKIKLVSSAGTGHFYTTTKNKRTKPEKLELKKFDPVVRQHVIYKEAKIK</sequence>
<organism>
    <name type="scientific">Salmonella paratyphi A (strain ATCC 9150 / SARB42)</name>
    <dbReference type="NCBI Taxonomy" id="295319"/>
    <lineage>
        <taxon>Bacteria</taxon>
        <taxon>Pseudomonadati</taxon>
        <taxon>Pseudomonadota</taxon>
        <taxon>Gammaproteobacteria</taxon>
        <taxon>Enterobacterales</taxon>
        <taxon>Enterobacteriaceae</taxon>
        <taxon>Salmonella</taxon>
    </lineage>
</organism>
<proteinExistence type="inferred from homology"/>
<comment type="similarity">
    <text evidence="1">Belongs to the bacterial ribosomal protein bL33 family.</text>
</comment>
<keyword id="KW-0687">Ribonucleoprotein</keyword>
<keyword id="KW-0689">Ribosomal protein</keyword>
<evidence type="ECO:0000255" key="1">
    <source>
        <dbReference type="HAMAP-Rule" id="MF_00294"/>
    </source>
</evidence>
<evidence type="ECO:0000305" key="2"/>